<keyword id="KW-0175">Coiled coil</keyword>
<keyword id="KW-0963">Cytoplasm</keyword>
<keyword id="KW-0509">mRNA transport</keyword>
<keyword id="KW-0906">Nuclear pore complex</keyword>
<keyword id="KW-0539">Nucleus</keyword>
<keyword id="KW-0653">Protein transport</keyword>
<keyword id="KW-1185">Reference proteome</keyword>
<keyword id="KW-0811">Translocation</keyword>
<keyword id="KW-0813">Transport</keyword>
<feature type="chain" id="PRO_0000204826" description="mRNA export factor GLE1">
    <location>
        <begin position="1"/>
        <end position="695"/>
    </location>
</feature>
<feature type="region of interest" description="Disordered" evidence="4">
    <location>
        <begin position="203"/>
        <end position="226"/>
    </location>
</feature>
<feature type="region of interest" description="Disordered" evidence="4">
    <location>
        <begin position="354"/>
        <end position="400"/>
    </location>
</feature>
<feature type="coiled-coil region" evidence="3">
    <location>
        <begin position="105"/>
        <end position="126"/>
    </location>
</feature>
<feature type="coiled-coil region" evidence="3">
    <location>
        <begin position="216"/>
        <end position="255"/>
    </location>
</feature>
<feature type="coiled-coil region" evidence="3">
    <location>
        <begin position="326"/>
        <end position="433"/>
    </location>
</feature>
<feature type="compositionally biased region" description="Basic and acidic residues" evidence="4">
    <location>
        <begin position="367"/>
        <end position="397"/>
    </location>
</feature>
<feature type="sequence conflict" description="In Ref. 1; AAT68166." evidence="5" ref="1">
    <original>P</original>
    <variation>L</variation>
    <location>
        <position position="18"/>
    </location>
</feature>
<feature type="sequence conflict" description="In Ref. 1; AAT68166." evidence="5" ref="1">
    <original>Y</original>
    <variation>H</variation>
    <location>
        <position position="24"/>
    </location>
</feature>
<feature type="sequence conflict" description="In Ref. 1; AAT68166." evidence="5" ref="1">
    <original>KEEE</original>
    <variation>EKEK</variation>
    <location>
        <begin position="114"/>
        <end position="117"/>
    </location>
</feature>
<feature type="sequence conflict" description="In Ref. 1; AAT68166." evidence="5" ref="1">
    <original>V</original>
    <variation>A</variation>
    <location>
        <position position="124"/>
    </location>
</feature>
<dbReference type="EMBL" id="AY648848">
    <property type="protein sequence ID" value="AAT68166.1"/>
    <property type="molecule type" value="mRNA"/>
</dbReference>
<dbReference type="EMBL" id="BC095550">
    <property type="protein sequence ID" value="AAH95550.1"/>
    <property type="status" value="ALT_SEQ"/>
    <property type="molecule type" value="mRNA"/>
</dbReference>
<dbReference type="SMR" id="Q6DRB1"/>
<dbReference type="FunCoup" id="Q6DRB1">
    <property type="interactions" value="2031"/>
</dbReference>
<dbReference type="STRING" id="7955.ENSDARP00000110644"/>
<dbReference type="PaxDb" id="7955-ENSDARP00000104523"/>
<dbReference type="AGR" id="ZFIN:ZDB-GENE-040831-4"/>
<dbReference type="ZFIN" id="ZDB-GENE-040831-4">
    <property type="gene designation" value="gle1"/>
</dbReference>
<dbReference type="eggNOG" id="KOG2412">
    <property type="taxonomic scope" value="Eukaryota"/>
</dbReference>
<dbReference type="InParanoid" id="Q6DRB1"/>
<dbReference type="PRO" id="PR:Q6DRB1"/>
<dbReference type="Proteomes" id="UP000000437">
    <property type="component" value="Unplaced"/>
</dbReference>
<dbReference type="GO" id="GO:0005737">
    <property type="term" value="C:cytoplasm"/>
    <property type="evidence" value="ECO:0000318"/>
    <property type="project" value="GO_Central"/>
</dbReference>
<dbReference type="GO" id="GO:0005576">
    <property type="term" value="C:extracellular region"/>
    <property type="evidence" value="ECO:0007669"/>
    <property type="project" value="GOC"/>
</dbReference>
<dbReference type="GO" id="GO:0044614">
    <property type="term" value="C:nuclear pore cytoplasmic filaments"/>
    <property type="evidence" value="ECO:0000318"/>
    <property type="project" value="GO_Central"/>
</dbReference>
<dbReference type="GO" id="GO:0000822">
    <property type="term" value="F:inositol hexakisphosphate binding"/>
    <property type="evidence" value="ECO:0000318"/>
    <property type="project" value="GO_Central"/>
</dbReference>
<dbReference type="GO" id="GO:0005543">
    <property type="term" value="F:phospholipid binding"/>
    <property type="evidence" value="ECO:0000318"/>
    <property type="project" value="GO_Central"/>
</dbReference>
<dbReference type="GO" id="GO:0031369">
    <property type="term" value="F:translation initiation factor binding"/>
    <property type="evidence" value="ECO:0000318"/>
    <property type="project" value="GO_Central"/>
</dbReference>
<dbReference type="GO" id="GO:0060287">
    <property type="term" value="P:epithelial cilium movement involved in determination of left/right asymmetry"/>
    <property type="evidence" value="ECO:0000315"/>
    <property type="project" value="ZFIN"/>
</dbReference>
<dbReference type="GO" id="GO:0048666">
    <property type="term" value="P:neuron development"/>
    <property type="evidence" value="ECO:0000315"/>
    <property type="project" value="ZFIN"/>
</dbReference>
<dbReference type="GO" id="GO:0016973">
    <property type="term" value="P:poly(A)+ mRNA export from nucleus"/>
    <property type="evidence" value="ECO:0000315"/>
    <property type="project" value="ZFIN"/>
</dbReference>
<dbReference type="GO" id="GO:0015031">
    <property type="term" value="P:protein transport"/>
    <property type="evidence" value="ECO:0007669"/>
    <property type="project" value="UniProtKB-KW"/>
</dbReference>
<dbReference type="GO" id="GO:0060296">
    <property type="term" value="P:regulation of cilium beat frequency involved in ciliary motility"/>
    <property type="evidence" value="ECO:0000315"/>
    <property type="project" value="CACAO"/>
</dbReference>
<dbReference type="GO" id="GO:0010842">
    <property type="term" value="P:retina layer formation"/>
    <property type="evidence" value="ECO:0000315"/>
    <property type="project" value="ZFIN"/>
</dbReference>
<dbReference type="GO" id="GO:0014044">
    <property type="term" value="P:Schwann cell development"/>
    <property type="evidence" value="ECO:0000315"/>
    <property type="project" value="CACAO"/>
</dbReference>
<dbReference type="GO" id="GO:0014037">
    <property type="term" value="P:Schwann cell differentiation"/>
    <property type="evidence" value="ECO:0000315"/>
    <property type="project" value="ZFIN"/>
</dbReference>
<dbReference type="GO" id="GO:0014010">
    <property type="term" value="P:Schwann cell proliferation"/>
    <property type="evidence" value="ECO:0000315"/>
    <property type="project" value="ZFIN"/>
</dbReference>
<dbReference type="FunFam" id="1.25.40.510:FF:000001">
    <property type="entry name" value="Nucleoporin GLE1 isoform 1"/>
    <property type="match status" value="1"/>
</dbReference>
<dbReference type="Gene3D" id="1.25.40.510">
    <property type="entry name" value="GLE1-like"/>
    <property type="match status" value="1"/>
</dbReference>
<dbReference type="InterPro" id="IPR012476">
    <property type="entry name" value="GLE1"/>
</dbReference>
<dbReference type="InterPro" id="IPR038506">
    <property type="entry name" value="GLE1-like_sf"/>
</dbReference>
<dbReference type="PANTHER" id="PTHR12960">
    <property type="entry name" value="GLE-1-RELATED"/>
    <property type="match status" value="1"/>
</dbReference>
<dbReference type="PANTHER" id="PTHR12960:SF0">
    <property type="entry name" value="MRNA EXPORT FACTOR GLE1"/>
    <property type="match status" value="1"/>
</dbReference>
<dbReference type="Pfam" id="PF07817">
    <property type="entry name" value="GLE1"/>
    <property type="match status" value="1"/>
</dbReference>
<protein>
    <recommendedName>
        <fullName evidence="5">mRNA export factor GLE1</fullName>
    </recommendedName>
    <alternativeName>
        <fullName evidence="5">GLE1 RNA export mediator</fullName>
    </alternativeName>
    <alternativeName>
        <fullName evidence="5">GLE1-like protein</fullName>
    </alternativeName>
    <alternativeName>
        <fullName evidence="5">Nucleoporin GLE1</fullName>
    </alternativeName>
</protein>
<evidence type="ECO:0000250" key="1"/>
<evidence type="ECO:0000250" key="2">
    <source>
        <dbReference type="UniProtKB" id="Q53GS7"/>
    </source>
</evidence>
<evidence type="ECO:0000255" key="3"/>
<evidence type="ECO:0000256" key="4">
    <source>
        <dbReference type="SAM" id="MobiDB-lite"/>
    </source>
</evidence>
<evidence type="ECO:0000305" key="5"/>
<sequence length="695" mass="79128">MPSENLRWETLEALKNSPKGKLKYSPDWVEKGEDVLAGCVEVPSLSPLSGQILKRMSPRMLLKNCSRSSSVRDTSPGLSEEAAVCRSAPISPRLKRSSCSLPAVSIQTEEEEEKEEEEKAEVVVEAPAVSPEASVSTPPAVSVLSPRATQISGCIRMCEQKHKAKAKMELSLRQEQQERLVATVANHESEQLKRFEEFMELKQRQEHQSIRDTNEKEAQESLGRQEKLREEHRHRMKILNLRLREMEQQRLREVELERQRQVEGRERHRAINAIQEEVLQLNRLLQPQQSTHAEVEHAPYITRGNQLCSQLSEVVPAAADDQFPSVEDLSVAERALQEMRSLVRSLQEAVSQAAERKKKKEQEEEEEKRRQEQLKAQQEEQKKSAALSAKEKAKKEGLQTGADDSTLKWYNSLQDLANQCAQAFDDLNKAKDTQTKKLKMELQKAATTPVSQIANSSGAPLKEAFEKIDKLLSRRPVTSAGKTVSTSQHPQGLEFASYRLAEKFVKQGEEEVASNHSAAFPIGAVASGIWELHPKIGDLILAHLHKKCPYAVPHYPPMESGTSVEDYQKILGYRVDEGKVEGQDSFLKRMSGMIRLYAAIIQMRWPYSSKQGLHLHGMNHGWRWMAQILNMEPLADITATILFDFLEVCGNALMKQYRVQFWKLILIINEEYFPRYLCFASILHFTCIHWLQNIE</sequence>
<organism>
    <name type="scientific">Danio rerio</name>
    <name type="common">Zebrafish</name>
    <name type="synonym">Brachydanio rerio</name>
    <dbReference type="NCBI Taxonomy" id="7955"/>
    <lineage>
        <taxon>Eukaryota</taxon>
        <taxon>Metazoa</taxon>
        <taxon>Chordata</taxon>
        <taxon>Craniata</taxon>
        <taxon>Vertebrata</taxon>
        <taxon>Euteleostomi</taxon>
        <taxon>Actinopterygii</taxon>
        <taxon>Neopterygii</taxon>
        <taxon>Teleostei</taxon>
        <taxon>Ostariophysi</taxon>
        <taxon>Cypriniformes</taxon>
        <taxon>Danionidae</taxon>
        <taxon>Danioninae</taxon>
        <taxon>Danio</taxon>
    </lineage>
</organism>
<name>GLE1_DANRE</name>
<proteinExistence type="evidence at transcript level"/>
<reference key="1">
    <citation type="journal article" date="2004" name="Proc. Natl. Acad. Sci. U.S.A.">
        <title>Identification of 315 genes essential for early zebrafish development.</title>
        <authorList>
            <person name="Amsterdam A."/>
            <person name="Nissen R.M."/>
            <person name="Sun Z."/>
            <person name="Swindell E.C."/>
            <person name="Farrington S."/>
            <person name="Hopkins N."/>
        </authorList>
    </citation>
    <scope>NUCLEOTIDE SEQUENCE [LARGE SCALE MRNA]</scope>
</reference>
<reference key="2">
    <citation type="submission" date="2005-05" db="EMBL/GenBank/DDBJ databases">
        <authorList>
            <consortium name="NIH - Zebrafish Gene Collection (ZGC) project"/>
        </authorList>
    </citation>
    <scope>NUCLEOTIDE SEQUENCE [LARGE SCALE MRNA] OF 1-437</scope>
    <source>
        <tissue>Olfactory epithelium</tissue>
    </source>
</reference>
<comment type="function">
    <text evidence="1">Required for the export of mRNAs containing poly(A) tails from the nucleus into the cytoplasm. May be involved in the terminal step of the mRNA transport through the nuclear pore complex (NPC) (By similarity).</text>
</comment>
<comment type="subunit">
    <text evidence="1">May associate with the NPC.</text>
</comment>
<comment type="subcellular location">
    <subcellularLocation>
        <location evidence="2">Nucleus</location>
    </subcellularLocation>
    <subcellularLocation>
        <location evidence="2">Cytoplasm</location>
    </subcellularLocation>
    <subcellularLocation>
        <location evidence="2">Nucleus</location>
        <location evidence="2">Nuclear pore complex</location>
    </subcellularLocation>
</comment>
<comment type="similarity">
    <text evidence="5">Belongs to the GLE1 family.</text>
</comment>
<comment type="sequence caution" evidence="5">
    <conflict type="miscellaneous discrepancy">
        <sequence resource="EMBL-CDS" id="AAH95550"/>
    </conflict>
    <text>Contaminating sequence. Potential poly-A sequence.</text>
</comment>
<gene>
    <name type="primary">gle1</name>
    <name type="synonym">gle1l</name>
</gene>
<accession>Q6DRB1</accession>
<accession>Q502U5</accession>